<organism>
    <name type="scientific">Shewanella sp. (strain W3-18-1)</name>
    <dbReference type="NCBI Taxonomy" id="351745"/>
    <lineage>
        <taxon>Bacteria</taxon>
        <taxon>Pseudomonadati</taxon>
        <taxon>Pseudomonadota</taxon>
        <taxon>Gammaproteobacteria</taxon>
        <taxon>Alteromonadales</taxon>
        <taxon>Shewanellaceae</taxon>
        <taxon>Shewanella</taxon>
    </lineage>
</organism>
<keyword id="KW-0963">Cytoplasm</keyword>
<keyword id="KW-0448">Lipopolysaccharide biosynthesis</keyword>
<keyword id="KW-0548">Nucleotidyltransferase</keyword>
<keyword id="KW-0808">Transferase</keyword>
<evidence type="ECO:0000255" key="1">
    <source>
        <dbReference type="HAMAP-Rule" id="MF_00057"/>
    </source>
</evidence>
<proteinExistence type="inferred from homology"/>
<feature type="chain" id="PRO_0000370160" description="8-amino-3,8-dideoxy-manno-octulosonate cytidylyltransferase">
    <location>
        <begin position="1"/>
        <end position="245"/>
    </location>
</feature>
<accession>A1RJ74</accession>
<dbReference type="EC" id="2.7.7.90" evidence="1"/>
<dbReference type="EMBL" id="CP000503">
    <property type="protein sequence ID" value="ABM24719.1"/>
    <property type="molecule type" value="Genomic_DNA"/>
</dbReference>
<dbReference type="RefSeq" id="WP_011789211.1">
    <property type="nucleotide sequence ID" value="NC_008750.1"/>
</dbReference>
<dbReference type="SMR" id="A1RJ74"/>
<dbReference type="GeneID" id="67443661"/>
<dbReference type="KEGG" id="shw:Sputw3181_1884"/>
<dbReference type="HOGENOM" id="CLU_065038_0_1_6"/>
<dbReference type="UniPathway" id="UPA00030"/>
<dbReference type="Proteomes" id="UP000002597">
    <property type="component" value="Chromosome"/>
</dbReference>
<dbReference type="GO" id="GO:0005829">
    <property type="term" value="C:cytosol"/>
    <property type="evidence" value="ECO:0007669"/>
    <property type="project" value="TreeGrafter"/>
</dbReference>
<dbReference type="GO" id="GO:0008690">
    <property type="term" value="F:3-deoxy-manno-octulosonate cytidylyltransferase activity"/>
    <property type="evidence" value="ECO:0007669"/>
    <property type="project" value="InterPro"/>
</dbReference>
<dbReference type="GO" id="GO:0009103">
    <property type="term" value="P:lipopolysaccharide biosynthetic process"/>
    <property type="evidence" value="ECO:0007669"/>
    <property type="project" value="UniProtKB-UniRule"/>
</dbReference>
<dbReference type="CDD" id="cd02517">
    <property type="entry name" value="CMP-KDO-Synthetase"/>
    <property type="match status" value="1"/>
</dbReference>
<dbReference type="FunFam" id="3.90.550.10:FF:000011">
    <property type="entry name" value="3-deoxy-manno-octulosonate cytidylyltransferase"/>
    <property type="match status" value="1"/>
</dbReference>
<dbReference type="Gene3D" id="3.90.550.10">
    <property type="entry name" value="Spore Coat Polysaccharide Biosynthesis Protein SpsA, Chain A"/>
    <property type="match status" value="1"/>
</dbReference>
<dbReference type="HAMAP" id="MF_00057">
    <property type="entry name" value="KdsB"/>
    <property type="match status" value="1"/>
</dbReference>
<dbReference type="InterPro" id="IPR003329">
    <property type="entry name" value="Cytidylyl_trans"/>
</dbReference>
<dbReference type="InterPro" id="IPR004528">
    <property type="entry name" value="KdsB"/>
</dbReference>
<dbReference type="InterPro" id="IPR029044">
    <property type="entry name" value="Nucleotide-diphossugar_trans"/>
</dbReference>
<dbReference type="NCBIfam" id="TIGR00466">
    <property type="entry name" value="kdsB"/>
    <property type="match status" value="1"/>
</dbReference>
<dbReference type="NCBIfam" id="NF003950">
    <property type="entry name" value="PRK05450.1-3"/>
    <property type="match status" value="1"/>
</dbReference>
<dbReference type="NCBIfam" id="NF003952">
    <property type="entry name" value="PRK05450.1-5"/>
    <property type="match status" value="1"/>
</dbReference>
<dbReference type="NCBIfam" id="NF009905">
    <property type="entry name" value="PRK13368.1"/>
    <property type="match status" value="1"/>
</dbReference>
<dbReference type="PANTHER" id="PTHR42866">
    <property type="entry name" value="3-DEOXY-MANNO-OCTULOSONATE CYTIDYLYLTRANSFERASE"/>
    <property type="match status" value="1"/>
</dbReference>
<dbReference type="PANTHER" id="PTHR42866:SF2">
    <property type="entry name" value="3-DEOXY-MANNO-OCTULOSONATE CYTIDYLYLTRANSFERASE, MITOCHONDRIAL"/>
    <property type="match status" value="1"/>
</dbReference>
<dbReference type="Pfam" id="PF02348">
    <property type="entry name" value="CTP_transf_3"/>
    <property type="match status" value="1"/>
</dbReference>
<dbReference type="SUPFAM" id="SSF53448">
    <property type="entry name" value="Nucleotide-diphospho-sugar transferases"/>
    <property type="match status" value="1"/>
</dbReference>
<gene>
    <name evidence="1" type="primary">kdsB</name>
    <name type="ordered locus">Sputw3181_1884</name>
</gene>
<reference key="1">
    <citation type="submission" date="2006-12" db="EMBL/GenBank/DDBJ databases">
        <title>Complete sequence of Shewanella sp. W3-18-1.</title>
        <authorList>
            <consortium name="US DOE Joint Genome Institute"/>
            <person name="Copeland A."/>
            <person name="Lucas S."/>
            <person name="Lapidus A."/>
            <person name="Barry K."/>
            <person name="Detter J.C."/>
            <person name="Glavina del Rio T."/>
            <person name="Hammon N."/>
            <person name="Israni S."/>
            <person name="Dalin E."/>
            <person name="Tice H."/>
            <person name="Pitluck S."/>
            <person name="Chain P."/>
            <person name="Malfatti S."/>
            <person name="Shin M."/>
            <person name="Vergez L."/>
            <person name="Schmutz J."/>
            <person name="Larimer F."/>
            <person name="Land M."/>
            <person name="Hauser L."/>
            <person name="Kyrpides N."/>
            <person name="Lykidis A."/>
            <person name="Tiedje J."/>
            <person name="Richardson P."/>
        </authorList>
    </citation>
    <scope>NUCLEOTIDE SEQUENCE [LARGE SCALE GENOMIC DNA]</scope>
    <source>
        <strain>W3-18-1</strain>
    </source>
</reference>
<protein>
    <recommendedName>
        <fullName evidence="1">8-amino-3,8-dideoxy-manno-octulosonate cytidylyltransferase</fullName>
        <ecNumber evidence="1">2.7.7.90</ecNumber>
    </recommendedName>
    <alternativeName>
        <fullName evidence="1">CMP-8-amino-3,8-dideoxy-manno-octulosonate synthase</fullName>
    </alternativeName>
</protein>
<name>KDSB_SHESW</name>
<comment type="function">
    <text evidence="1">Activates KDO8N (a required 8-carbon sugar) for incorporation into bacterial lipopolysaccharide in the Shewanella genus.</text>
</comment>
<comment type="catalytic activity">
    <reaction evidence="1">
        <text>8-amino-3,8-dideoxy-alpha-D-manno-octulosonate + CTP = CMP-8-amino-3,8-dideoxy-alpha-D-manno-oct-2-ulosonate + diphosphate</text>
        <dbReference type="Rhea" id="RHEA:49284"/>
        <dbReference type="ChEBI" id="CHEBI:33019"/>
        <dbReference type="ChEBI" id="CHEBI:37563"/>
        <dbReference type="ChEBI" id="CHEBI:87091"/>
        <dbReference type="ChEBI" id="CHEBI:91089"/>
        <dbReference type="EC" id="2.7.7.90"/>
    </reaction>
</comment>
<comment type="pathway">
    <text evidence="1">Bacterial outer membrane biogenesis; lipopolysaccharide biosynthesis.</text>
</comment>
<comment type="subcellular location">
    <subcellularLocation>
        <location evidence="1">Cytoplasm</location>
    </subcellularLocation>
</comment>
<comment type="similarity">
    <text evidence="1">Belongs to the KdsB family.</text>
</comment>
<sequence>MNVILLIPARYGSSRFPGKPLAPINGKPMIQHVYERASLAKGLTNIYVATDDERIKATVEGFGGKVVMTSPDAASGTDRINEAIKLLGLKDDDLVINVQGDQPLIDPTAIEQLINLFERQPGEFEMATLGYEIVNKADIDDPMQVKMVFDNNYYALYFSRSRIPFGRDTQDYPVFKHLGIYAYTSKFVQTFAALPLGRLEDLEKLEQLRALEHGHKIKIAISASNSLEVDRPEDIHKCEQRLAAG</sequence>